<evidence type="ECO:0000255" key="1">
    <source>
        <dbReference type="HAMAP-Rule" id="MF_00740"/>
    </source>
</evidence>
<protein>
    <recommendedName>
        <fullName evidence="1">Phosphopentomutase</fullName>
        <ecNumber evidence="1">5.4.2.7</ecNumber>
    </recommendedName>
    <alternativeName>
        <fullName evidence="1">Phosphodeoxyribomutase</fullName>
    </alternativeName>
</protein>
<feature type="chain" id="PRO_1000212813" description="Phosphopentomutase">
    <location>
        <begin position="1"/>
        <end position="407"/>
    </location>
</feature>
<feature type="binding site" evidence="1">
    <location>
        <position position="10"/>
    </location>
    <ligand>
        <name>Mn(2+)</name>
        <dbReference type="ChEBI" id="CHEBI:29035"/>
        <label>1</label>
    </ligand>
</feature>
<feature type="binding site" evidence="1">
    <location>
        <position position="306"/>
    </location>
    <ligand>
        <name>Mn(2+)</name>
        <dbReference type="ChEBI" id="CHEBI:29035"/>
        <label>2</label>
    </ligand>
</feature>
<feature type="binding site" evidence="1">
    <location>
        <position position="311"/>
    </location>
    <ligand>
        <name>Mn(2+)</name>
        <dbReference type="ChEBI" id="CHEBI:29035"/>
        <label>2</label>
    </ligand>
</feature>
<feature type="binding site" evidence="1">
    <location>
        <position position="347"/>
    </location>
    <ligand>
        <name>Mn(2+)</name>
        <dbReference type="ChEBI" id="CHEBI:29035"/>
        <label>1</label>
    </ligand>
</feature>
<feature type="binding site" evidence="1">
    <location>
        <position position="348"/>
    </location>
    <ligand>
        <name>Mn(2+)</name>
        <dbReference type="ChEBI" id="CHEBI:29035"/>
        <label>1</label>
    </ligand>
</feature>
<feature type="binding site" evidence="1">
    <location>
        <position position="359"/>
    </location>
    <ligand>
        <name>Mn(2+)</name>
        <dbReference type="ChEBI" id="CHEBI:29035"/>
        <label>2</label>
    </ligand>
</feature>
<keyword id="KW-0963">Cytoplasm</keyword>
<keyword id="KW-0413">Isomerase</keyword>
<keyword id="KW-0464">Manganese</keyword>
<keyword id="KW-0479">Metal-binding</keyword>
<gene>
    <name evidence="1" type="primary">deoB</name>
    <name type="ordered locus">PC1_0601</name>
</gene>
<name>DEOB_PECCP</name>
<dbReference type="EC" id="5.4.2.7" evidence="1"/>
<dbReference type="EMBL" id="CP001657">
    <property type="protein sequence ID" value="ACT11656.1"/>
    <property type="molecule type" value="Genomic_DNA"/>
</dbReference>
<dbReference type="RefSeq" id="WP_012773303.1">
    <property type="nucleotide sequence ID" value="NC_012917.1"/>
</dbReference>
<dbReference type="SMR" id="C6DKL9"/>
<dbReference type="STRING" id="561230.PC1_0601"/>
<dbReference type="KEGG" id="pct:PC1_0601"/>
<dbReference type="eggNOG" id="COG1015">
    <property type="taxonomic scope" value="Bacteria"/>
</dbReference>
<dbReference type="HOGENOM" id="CLU_053861_0_0_6"/>
<dbReference type="OrthoDB" id="9769930at2"/>
<dbReference type="UniPathway" id="UPA00002">
    <property type="reaction ID" value="UER00467"/>
</dbReference>
<dbReference type="Proteomes" id="UP000002736">
    <property type="component" value="Chromosome"/>
</dbReference>
<dbReference type="GO" id="GO:0005829">
    <property type="term" value="C:cytosol"/>
    <property type="evidence" value="ECO:0007669"/>
    <property type="project" value="TreeGrafter"/>
</dbReference>
<dbReference type="GO" id="GO:0000287">
    <property type="term" value="F:magnesium ion binding"/>
    <property type="evidence" value="ECO:0007669"/>
    <property type="project" value="InterPro"/>
</dbReference>
<dbReference type="GO" id="GO:0030145">
    <property type="term" value="F:manganese ion binding"/>
    <property type="evidence" value="ECO:0007669"/>
    <property type="project" value="UniProtKB-UniRule"/>
</dbReference>
<dbReference type="GO" id="GO:0008973">
    <property type="term" value="F:phosphopentomutase activity"/>
    <property type="evidence" value="ECO:0007669"/>
    <property type="project" value="UniProtKB-UniRule"/>
</dbReference>
<dbReference type="GO" id="GO:0006018">
    <property type="term" value="P:2-deoxyribose 1-phosphate catabolic process"/>
    <property type="evidence" value="ECO:0007669"/>
    <property type="project" value="UniProtKB-UniRule"/>
</dbReference>
<dbReference type="GO" id="GO:0006015">
    <property type="term" value="P:5-phosphoribose 1-diphosphate biosynthetic process"/>
    <property type="evidence" value="ECO:0007669"/>
    <property type="project" value="UniProtKB-UniPathway"/>
</dbReference>
<dbReference type="GO" id="GO:0043094">
    <property type="term" value="P:metabolic compound salvage"/>
    <property type="evidence" value="ECO:0007669"/>
    <property type="project" value="InterPro"/>
</dbReference>
<dbReference type="GO" id="GO:0009117">
    <property type="term" value="P:nucleotide metabolic process"/>
    <property type="evidence" value="ECO:0007669"/>
    <property type="project" value="InterPro"/>
</dbReference>
<dbReference type="CDD" id="cd16009">
    <property type="entry name" value="PPM"/>
    <property type="match status" value="1"/>
</dbReference>
<dbReference type="FunFam" id="3.30.70.1250:FF:000001">
    <property type="entry name" value="Phosphopentomutase"/>
    <property type="match status" value="1"/>
</dbReference>
<dbReference type="Gene3D" id="3.40.720.10">
    <property type="entry name" value="Alkaline Phosphatase, subunit A"/>
    <property type="match status" value="1"/>
</dbReference>
<dbReference type="Gene3D" id="3.30.70.1250">
    <property type="entry name" value="Phosphopentomutase"/>
    <property type="match status" value="1"/>
</dbReference>
<dbReference type="HAMAP" id="MF_00740">
    <property type="entry name" value="Phosphopentomut"/>
    <property type="match status" value="1"/>
</dbReference>
<dbReference type="InterPro" id="IPR017850">
    <property type="entry name" value="Alkaline_phosphatase_core_sf"/>
</dbReference>
<dbReference type="InterPro" id="IPR010045">
    <property type="entry name" value="DeoB"/>
</dbReference>
<dbReference type="InterPro" id="IPR006124">
    <property type="entry name" value="Metalloenzyme"/>
</dbReference>
<dbReference type="InterPro" id="IPR024052">
    <property type="entry name" value="Phosphopentomutase_DeoB_cap_sf"/>
</dbReference>
<dbReference type="NCBIfam" id="TIGR01696">
    <property type="entry name" value="deoB"/>
    <property type="match status" value="1"/>
</dbReference>
<dbReference type="NCBIfam" id="NF003766">
    <property type="entry name" value="PRK05362.1"/>
    <property type="match status" value="1"/>
</dbReference>
<dbReference type="PANTHER" id="PTHR21110">
    <property type="entry name" value="PHOSPHOPENTOMUTASE"/>
    <property type="match status" value="1"/>
</dbReference>
<dbReference type="PANTHER" id="PTHR21110:SF0">
    <property type="entry name" value="PHOSPHOPENTOMUTASE"/>
    <property type="match status" value="1"/>
</dbReference>
<dbReference type="Pfam" id="PF01676">
    <property type="entry name" value="Metalloenzyme"/>
    <property type="match status" value="1"/>
</dbReference>
<dbReference type="PIRSF" id="PIRSF001491">
    <property type="entry name" value="Ppentomutase"/>
    <property type="match status" value="1"/>
</dbReference>
<dbReference type="SUPFAM" id="SSF53649">
    <property type="entry name" value="Alkaline phosphatase-like"/>
    <property type="match status" value="1"/>
</dbReference>
<dbReference type="SUPFAM" id="SSF143856">
    <property type="entry name" value="DeoB insert domain-like"/>
    <property type="match status" value="1"/>
</dbReference>
<comment type="function">
    <text evidence="1">Isomerase that catalyzes the conversion of deoxy-ribose 1-phosphate (dRib-1-P) and ribose 1-phosphate (Rib-1-P) to deoxy-ribose 5-phosphate (dRib-5-P) and ribose 5-phosphate (Rib-5-P), respectively.</text>
</comment>
<comment type="catalytic activity">
    <reaction evidence="1">
        <text>2-deoxy-alpha-D-ribose 1-phosphate = 2-deoxy-D-ribose 5-phosphate</text>
        <dbReference type="Rhea" id="RHEA:27658"/>
        <dbReference type="ChEBI" id="CHEBI:57259"/>
        <dbReference type="ChEBI" id="CHEBI:62877"/>
        <dbReference type="EC" id="5.4.2.7"/>
    </reaction>
</comment>
<comment type="catalytic activity">
    <reaction evidence="1">
        <text>alpha-D-ribose 1-phosphate = D-ribose 5-phosphate</text>
        <dbReference type="Rhea" id="RHEA:18793"/>
        <dbReference type="ChEBI" id="CHEBI:57720"/>
        <dbReference type="ChEBI" id="CHEBI:78346"/>
        <dbReference type="EC" id="5.4.2.7"/>
    </reaction>
</comment>
<comment type="cofactor">
    <cofactor evidence="1">
        <name>Mn(2+)</name>
        <dbReference type="ChEBI" id="CHEBI:29035"/>
    </cofactor>
    <text evidence="1">Binds 2 manganese ions.</text>
</comment>
<comment type="pathway">
    <text evidence="1">Carbohydrate degradation; 2-deoxy-D-ribose 1-phosphate degradation; D-glyceraldehyde 3-phosphate and acetaldehyde from 2-deoxy-alpha-D-ribose 1-phosphate: step 1/2.</text>
</comment>
<comment type="subcellular location">
    <subcellularLocation>
        <location evidence="1">Cytoplasm</location>
    </subcellularLocation>
</comment>
<comment type="similarity">
    <text evidence="1">Belongs to the phosphopentomutase family.</text>
</comment>
<organism>
    <name type="scientific">Pectobacterium carotovorum subsp. carotovorum (strain PC1)</name>
    <dbReference type="NCBI Taxonomy" id="561230"/>
    <lineage>
        <taxon>Bacteria</taxon>
        <taxon>Pseudomonadati</taxon>
        <taxon>Pseudomonadota</taxon>
        <taxon>Gammaproteobacteria</taxon>
        <taxon>Enterobacterales</taxon>
        <taxon>Pectobacteriaceae</taxon>
        <taxon>Pectobacterium</taxon>
    </lineage>
</organism>
<accession>C6DKL9</accession>
<reference key="1">
    <citation type="submission" date="2009-07" db="EMBL/GenBank/DDBJ databases">
        <title>Complete sequence of Pectobacterium carotovorum subsp. carotovorum PC1.</title>
        <authorList>
            <consortium name="US DOE Joint Genome Institute"/>
            <person name="Lucas S."/>
            <person name="Copeland A."/>
            <person name="Lapidus A."/>
            <person name="Glavina del Rio T."/>
            <person name="Tice H."/>
            <person name="Bruce D."/>
            <person name="Goodwin L."/>
            <person name="Pitluck S."/>
            <person name="Munk A.C."/>
            <person name="Brettin T."/>
            <person name="Detter J.C."/>
            <person name="Han C."/>
            <person name="Tapia R."/>
            <person name="Larimer F."/>
            <person name="Land M."/>
            <person name="Hauser L."/>
            <person name="Kyrpides N."/>
            <person name="Mikhailova N."/>
            <person name="Balakrishnan V."/>
            <person name="Glasner J."/>
            <person name="Perna N.T."/>
        </authorList>
    </citation>
    <scope>NUCLEOTIDE SEQUENCE [LARGE SCALE GENOMIC DNA]</scope>
    <source>
        <strain>PC1</strain>
    </source>
</reference>
<proteinExistence type="inferred from homology"/>
<sequence>MKRAYIMVLDSFGIGSSADAERFGDAGSDTLGHIAQACAAGTADKGRSGPLHLPNLSRLGLGKAAEASTGTFPAGLDENADIIGAYAHASEISSGKDTPSGHWEIAGVPVLFDWGYFKDEENSFPQDLLDKLVKRANLPGYLGNCHSSGTVILDQLAEEHMKTGKPIFYTSADSVFQIACHEETFGLDKLYELCEIAREELTEGGYNIGRVIARPFIGDKPGHFERTGNRHDLAVEPPAPTILKKMVDEKGGEVVSVGKIADIYAQVGITKKVKATGIDALFDATLKEMDSAGDNTIVFTNFVDFDSAYGHRRDIPGYAAALELFDRRLPEMLSRVKGDDILILTADHGCDPSWHGTDHTRENVPVLIYGPNVKPGSYGHRETFADIGQTVAAYFGLSPMDYGKSIL</sequence>